<keyword id="KW-0067">ATP-binding</keyword>
<keyword id="KW-0963">Cytoplasm</keyword>
<keyword id="KW-0418">Kinase</keyword>
<keyword id="KW-0547">Nucleotide-binding</keyword>
<keyword id="KW-0597">Phosphoprotein</keyword>
<keyword id="KW-1185">Reference proteome</keyword>
<keyword id="KW-0723">Serine/threonine-protein kinase</keyword>
<keyword id="KW-0808">Transferase</keyword>
<reference key="1">
    <citation type="journal article" date="2009" name="PLoS Biol.">
        <title>Lineage-specific biology revealed by a finished genome assembly of the mouse.</title>
        <authorList>
            <person name="Church D.M."/>
            <person name="Goodstadt L."/>
            <person name="Hillier L.W."/>
            <person name="Zody M.C."/>
            <person name="Goldstein S."/>
            <person name="She X."/>
            <person name="Bult C.J."/>
            <person name="Agarwala R."/>
            <person name="Cherry J.L."/>
            <person name="DiCuccio M."/>
            <person name="Hlavina W."/>
            <person name="Kapustin Y."/>
            <person name="Meric P."/>
            <person name="Maglott D."/>
            <person name="Birtle Z."/>
            <person name="Marques A.C."/>
            <person name="Graves T."/>
            <person name="Zhou S."/>
            <person name="Teague B."/>
            <person name="Potamousis K."/>
            <person name="Churas C."/>
            <person name="Place M."/>
            <person name="Herschleb J."/>
            <person name="Runnheim R."/>
            <person name="Forrest D."/>
            <person name="Amos-Landgraf J."/>
            <person name="Schwartz D.C."/>
            <person name="Cheng Z."/>
            <person name="Lindblad-Toh K."/>
            <person name="Eichler E.E."/>
            <person name="Ponting C.P."/>
        </authorList>
    </citation>
    <scope>NUCLEOTIDE SEQUENCE [LARGE SCALE GENOMIC DNA]</scope>
    <source>
        <strain>C57BL/6J</strain>
    </source>
</reference>
<reference key="2">
    <citation type="journal article" date="2004" name="Genome Res.">
        <title>The status, quality, and expansion of the NIH full-length cDNA project: the Mammalian Gene Collection (MGC).</title>
        <authorList>
            <consortium name="The MGC Project Team"/>
        </authorList>
    </citation>
    <scope>NUCLEOTIDE SEQUENCE [LARGE SCALE MRNA] OF 832-1308</scope>
    <source>
        <strain>C57BL/6J</strain>
        <tissue>Brain</tissue>
    </source>
</reference>
<reference key="3">
    <citation type="journal article" date="2006" name="J. Neurochem.">
        <title>Tau-tubulin kinase 1 (TTBK1), a neuron-specific tau kinase candidate, is involved in tau phosphorylation and aggregation.</title>
        <authorList>
            <person name="Sato S."/>
            <person name="Cerny R.L."/>
            <person name="Buescher J.L."/>
            <person name="Ikezu T."/>
        </authorList>
    </citation>
    <scope>TISSUE SPECIFICITY</scope>
</reference>
<reference key="4">
    <citation type="journal article" date="2010" name="Cell">
        <title>A tissue-specific atlas of mouse protein phosphorylation and expression.</title>
        <authorList>
            <person name="Huttlin E.L."/>
            <person name="Jedrychowski M.P."/>
            <person name="Elias J.E."/>
            <person name="Goswami T."/>
            <person name="Rad R."/>
            <person name="Beausoleil S.A."/>
            <person name="Villen J."/>
            <person name="Haas W."/>
            <person name="Sowa M.E."/>
            <person name="Gygi S.P."/>
        </authorList>
    </citation>
    <scope>PHOSPHORYLATION [LARGE SCALE ANALYSIS] AT SER-441 AND SER-541</scope>
    <scope>IDENTIFICATION BY MASS SPECTROMETRY [LARGE SCALE ANALYSIS]</scope>
    <source>
        <tissue>Brain</tissue>
    </source>
</reference>
<comment type="function">
    <text evidence="1">Serine/threonine kinase which is able to phosphorylate TAU on serine, threonine and tyrosine residues. Induces aggregation of TAU (By similarity).</text>
</comment>
<comment type="catalytic activity">
    <reaction>
        <text>L-seryl-[protein] + ATP = O-phospho-L-seryl-[protein] + ADP + H(+)</text>
        <dbReference type="Rhea" id="RHEA:17989"/>
        <dbReference type="Rhea" id="RHEA-COMP:9863"/>
        <dbReference type="Rhea" id="RHEA-COMP:11604"/>
        <dbReference type="ChEBI" id="CHEBI:15378"/>
        <dbReference type="ChEBI" id="CHEBI:29999"/>
        <dbReference type="ChEBI" id="CHEBI:30616"/>
        <dbReference type="ChEBI" id="CHEBI:83421"/>
        <dbReference type="ChEBI" id="CHEBI:456216"/>
        <dbReference type="EC" id="2.7.11.1"/>
    </reaction>
</comment>
<comment type="catalytic activity">
    <reaction>
        <text>L-threonyl-[protein] + ATP = O-phospho-L-threonyl-[protein] + ADP + H(+)</text>
        <dbReference type="Rhea" id="RHEA:46608"/>
        <dbReference type="Rhea" id="RHEA-COMP:11060"/>
        <dbReference type="Rhea" id="RHEA-COMP:11605"/>
        <dbReference type="ChEBI" id="CHEBI:15378"/>
        <dbReference type="ChEBI" id="CHEBI:30013"/>
        <dbReference type="ChEBI" id="CHEBI:30616"/>
        <dbReference type="ChEBI" id="CHEBI:61977"/>
        <dbReference type="ChEBI" id="CHEBI:456216"/>
        <dbReference type="EC" id="2.7.11.1"/>
    </reaction>
</comment>
<comment type="cofactor">
    <cofactor evidence="1">
        <name>Mg(2+)</name>
        <dbReference type="ChEBI" id="CHEBI:18420"/>
    </cofactor>
    <cofactor evidence="1">
        <name>Mn(2+)</name>
        <dbReference type="ChEBI" id="CHEBI:29035"/>
    </cofactor>
    <text evidence="1">Divalent metal cations. Mg(2+) or, to a lesser extent, Mn(2+), but not Ca(2+) or Zn(2+).</text>
</comment>
<comment type="subcellular location">
    <subcellularLocation>
        <location evidence="1">Cytoplasm</location>
    </subcellularLocation>
</comment>
<comment type="tissue specificity">
    <text evidence="4">Expressed in the brain. Strong expression in the cortical layers, the CA1 layers of the hippocampus and the granular layer of the cerebellum. Also expressed in the large cortical pyramidal cells in the temporal cortex, the CA1 pyramidal neurons and the cerebellum granular neurons.</text>
</comment>
<comment type="similarity">
    <text evidence="5">Belongs to the protein kinase superfamily. CK1 Ser/Thr protein kinase family.</text>
</comment>
<feature type="chain" id="PRO_0000278542" description="Tau-tubulin kinase 1">
    <location>
        <begin position="1"/>
        <end position="1308"/>
    </location>
</feature>
<feature type="domain" description="Protein kinase" evidence="2">
    <location>
        <begin position="34"/>
        <end position="297"/>
    </location>
</feature>
<feature type="region of interest" description="Disordered" evidence="3">
    <location>
        <begin position="364"/>
        <end position="397"/>
    </location>
</feature>
<feature type="region of interest" description="Disordered" evidence="3">
    <location>
        <begin position="418"/>
        <end position="448"/>
    </location>
</feature>
<feature type="region of interest" description="Disordered" evidence="3">
    <location>
        <begin position="474"/>
        <end position="671"/>
    </location>
</feature>
<feature type="region of interest" description="Disordered" evidence="3">
    <location>
        <begin position="720"/>
        <end position="899"/>
    </location>
</feature>
<feature type="region of interest" description="Disordered" evidence="3">
    <location>
        <begin position="985"/>
        <end position="1085"/>
    </location>
</feature>
<feature type="region of interest" description="Disordered" evidence="3">
    <location>
        <begin position="1097"/>
        <end position="1308"/>
    </location>
</feature>
<feature type="compositionally biased region" description="Polar residues" evidence="3">
    <location>
        <begin position="485"/>
        <end position="496"/>
    </location>
</feature>
<feature type="compositionally biased region" description="Basic and acidic residues" evidence="3">
    <location>
        <begin position="541"/>
        <end position="555"/>
    </location>
</feature>
<feature type="compositionally biased region" description="Basic and acidic residues" evidence="3">
    <location>
        <begin position="574"/>
        <end position="589"/>
    </location>
</feature>
<feature type="compositionally biased region" description="Low complexity" evidence="3">
    <location>
        <begin position="638"/>
        <end position="647"/>
    </location>
</feature>
<feature type="compositionally biased region" description="Acidic residues" evidence="3">
    <location>
        <begin position="735"/>
        <end position="769"/>
    </location>
</feature>
<feature type="compositionally biased region" description="Basic and acidic residues" evidence="3">
    <location>
        <begin position="786"/>
        <end position="795"/>
    </location>
</feature>
<feature type="compositionally biased region" description="Polar residues" evidence="3">
    <location>
        <begin position="868"/>
        <end position="885"/>
    </location>
</feature>
<feature type="compositionally biased region" description="Polar residues" evidence="3">
    <location>
        <begin position="1020"/>
        <end position="1035"/>
    </location>
</feature>
<feature type="compositionally biased region" description="Low complexity" evidence="3">
    <location>
        <begin position="1097"/>
        <end position="1107"/>
    </location>
</feature>
<feature type="active site" description="Proton acceptor" evidence="2">
    <location>
        <position position="154"/>
    </location>
</feature>
<feature type="binding site" evidence="2">
    <location>
        <begin position="40"/>
        <end position="48"/>
    </location>
    <ligand>
        <name>ATP</name>
        <dbReference type="ChEBI" id="CHEBI:30616"/>
    </ligand>
</feature>
<feature type="binding site" evidence="2">
    <location>
        <position position="63"/>
    </location>
    <ligand>
        <name>ATP</name>
        <dbReference type="ChEBI" id="CHEBI:30616"/>
    </ligand>
</feature>
<feature type="modified residue" description="Phosphoserine" evidence="6">
    <location>
        <position position="441"/>
    </location>
</feature>
<feature type="modified residue" description="Phosphoserine" evidence="6">
    <location>
        <position position="541"/>
    </location>
</feature>
<evidence type="ECO:0000250" key="1"/>
<evidence type="ECO:0000255" key="2">
    <source>
        <dbReference type="PROSITE-ProRule" id="PRU00159"/>
    </source>
</evidence>
<evidence type="ECO:0000256" key="3">
    <source>
        <dbReference type="SAM" id="MobiDB-lite"/>
    </source>
</evidence>
<evidence type="ECO:0000269" key="4">
    <source>
    </source>
</evidence>
<evidence type="ECO:0000305" key="5"/>
<evidence type="ECO:0007744" key="6">
    <source>
    </source>
</evidence>
<protein>
    <recommendedName>
        <fullName>Tau-tubulin kinase 1</fullName>
        <ecNumber>2.7.11.1</ecNumber>
    </recommendedName>
</protein>
<gene>
    <name type="primary">Ttbk1</name>
</gene>
<organism>
    <name type="scientific">Mus musculus</name>
    <name type="common">Mouse</name>
    <dbReference type="NCBI Taxonomy" id="10090"/>
    <lineage>
        <taxon>Eukaryota</taxon>
        <taxon>Metazoa</taxon>
        <taxon>Chordata</taxon>
        <taxon>Craniata</taxon>
        <taxon>Vertebrata</taxon>
        <taxon>Euteleostomi</taxon>
        <taxon>Mammalia</taxon>
        <taxon>Eutheria</taxon>
        <taxon>Euarchontoglires</taxon>
        <taxon>Glires</taxon>
        <taxon>Rodentia</taxon>
        <taxon>Myomorpha</taxon>
        <taxon>Muroidea</taxon>
        <taxon>Muridae</taxon>
        <taxon>Murinae</taxon>
        <taxon>Mus</taxon>
        <taxon>Mus</taxon>
    </lineage>
</organism>
<name>TTBK1_MOUSE</name>
<accession>Q6PCN3</accession>
<sequence>MQCLAAALKDETNMSGGGEQADILPANYVVKDRWKVLKKIGGGGFGEIYEAMDLLTRENVALKVESAQQPKQVLKMEVAVLKKLQGKDHVCRFIGCGRNEKFNYVVMQLQGRNLADLRRSQPRGTFTLSTTLRLGKQILESIEAIHSVGFLHRDIKPSNFAMGRLPSTYRKCYMLDFGLARQYTNTTGDVRPPRNVAGFRGTVRYASVNAHKNREMGRHDDLWSLFYMLVEFAVGQLPWRKIKDKEQVGMIKEKYEHRMLLKHMPSEFHLFLDHIASLDYFTKPDYQLIMSVFENSMKERGIAENEAFDWEKAGTDALLSTSTSTPPQQNTRQTAAMFGVVNVTPVPGDLLRENTEDVLQGEHLSDQENAPPILPGRPPEGLGPGPHLVPHPGGPEAEVWEETDVNRNKLRINIGKTPCVEEEQSRGVGVPSSPVRAPPDSPTTPVRSLCYRRVNSPESERLSTAADGRVELQERRSRMDLPGSPSRQACSSQPAQMLSVDTGHADRQASGRMDVSASVEQEALSNAFRSVPLAEEEDFDSKEWVIIDKETELKDFPPGAEPSTSGTTDEEPEELRPLPEEGEERRRLGTEPTVRPRGRGMHTLTEEDPRQMLPQPAPPQLSQADGRSETSQPPTPGSPSHSPLHSGPRPRRRESDPTGPQRQVFSVAPPFEVNGLPRAVPLALPYQDFKRDLSDYRERARLLNRVRRVGFSHMLLTAPQVPLAPFQPQANGKEGEEEEEEEEEEEEEEEEEEEEEEEEEEEEEEEEEAGALGEVLGPRSGSSSEGSERSTERSQEGAPSTLLADDQKEARGRASMADGDLEPEEGSKTLVLVSPGDMKKSPVTAELAPDPDLGTLAALTPQHERPQPTGSQLDVSEPGTLSSILKSEPKPSGPGAGGGVGLVAPGAGVTAVTSPFTKVERTFVHIAEKSHLNVMSSGGQASRPEELSTGGELGLEVLSEGGIAEEGAPAPLENGMALAGLDGTEMESCALSGPPGETPSEVVTDSLPNGPALADGPAPASQQEPVTKKGTTISPSRHAMPGSRPRSRIPVLLSEEDTGSEPSGSLSAKERWSKRARPQQDLARLVMEKRQGRLLLRLASGASSSSSEEQRRASETLSGTGSEEDTPASEPTTALPRKAVRAATTRSRIPRPISVSMPVEGQQLPGRPHGAASATDLAITSRLQLQKPSGLAPAADLRPKQSASRGPGPGRAQVSKPAAPRSPGLPASTARHPSGSPRSQSLSRKESSSPSHQARPGVPPSRGVLQVRSQPEASPVAPKKGPKGKQLQTQRAATKGRAVVSEGRPGAR</sequence>
<proteinExistence type="evidence at protein level"/>
<dbReference type="EC" id="2.7.11.1"/>
<dbReference type="EMBL" id="AC165445">
    <property type="status" value="NOT_ANNOTATED_CDS"/>
    <property type="molecule type" value="Genomic_DNA"/>
</dbReference>
<dbReference type="EMBL" id="CAAA01116144">
    <property type="status" value="NOT_ANNOTATED_CDS"/>
    <property type="molecule type" value="Genomic_DNA"/>
</dbReference>
<dbReference type="EMBL" id="BC059249">
    <property type="protein sequence ID" value="AAH59249.3"/>
    <property type="molecule type" value="mRNA"/>
</dbReference>
<dbReference type="CCDS" id="CCDS50125.1"/>
<dbReference type="RefSeq" id="NP_001156336.1">
    <property type="nucleotide sequence ID" value="NM_001162864.2"/>
</dbReference>
<dbReference type="RefSeq" id="XP_036016144.1">
    <property type="nucleotide sequence ID" value="XM_036160251.1"/>
</dbReference>
<dbReference type="SMR" id="Q6PCN3"/>
<dbReference type="BioGRID" id="223124">
    <property type="interactions" value="2"/>
</dbReference>
<dbReference type="FunCoup" id="Q6PCN3">
    <property type="interactions" value="1467"/>
</dbReference>
<dbReference type="STRING" id="10090.ENSMUSP00000044580"/>
<dbReference type="GlyGen" id="Q6PCN3">
    <property type="glycosylation" value="2 sites, 1 O-linked glycan (1 site)"/>
</dbReference>
<dbReference type="iPTMnet" id="Q6PCN3"/>
<dbReference type="PhosphoSitePlus" id="Q6PCN3"/>
<dbReference type="PaxDb" id="10090-ENSMUSP00000044580"/>
<dbReference type="PeptideAtlas" id="Q6PCN3"/>
<dbReference type="ProteomicsDB" id="297739"/>
<dbReference type="Antibodypedia" id="30359">
    <property type="antibodies" value="183 antibodies from 30 providers"/>
</dbReference>
<dbReference type="DNASU" id="106763"/>
<dbReference type="Ensembl" id="ENSMUST00000047034.9">
    <property type="protein sequence ID" value="ENSMUSP00000044580.8"/>
    <property type="gene ID" value="ENSMUSG00000015599.10"/>
</dbReference>
<dbReference type="GeneID" id="106763"/>
<dbReference type="KEGG" id="mmu:106763"/>
<dbReference type="UCSC" id="uc008csx.2">
    <property type="organism name" value="mouse"/>
</dbReference>
<dbReference type="AGR" id="MGI:2147036"/>
<dbReference type="CTD" id="84630"/>
<dbReference type="MGI" id="MGI:2147036">
    <property type="gene designation" value="Ttbk1"/>
</dbReference>
<dbReference type="VEuPathDB" id="HostDB:ENSMUSG00000015599"/>
<dbReference type="eggNOG" id="KOG1164">
    <property type="taxonomic scope" value="Eukaryota"/>
</dbReference>
<dbReference type="GeneTree" id="ENSGT00940000160981"/>
<dbReference type="HOGENOM" id="CLU_003410_0_0_1"/>
<dbReference type="InParanoid" id="Q6PCN3"/>
<dbReference type="OMA" id="KERWNKR"/>
<dbReference type="OrthoDB" id="5979581at2759"/>
<dbReference type="PhylomeDB" id="Q6PCN3"/>
<dbReference type="TreeFam" id="TF351646"/>
<dbReference type="BRENDA" id="2.7.11.26">
    <property type="organism ID" value="3474"/>
</dbReference>
<dbReference type="BioGRID-ORCS" id="106763">
    <property type="hits" value="3 hits in 79 CRISPR screens"/>
</dbReference>
<dbReference type="ChiTaRS" id="Ttbk1">
    <property type="organism name" value="mouse"/>
</dbReference>
<dbReference type="PRO" id="PR:Q6PCN3"/>
<dbReference type="Proteomes" id="UP000000589">
    <property type="component" value="Chromosome 17"/>
</dbReference>
<dbReference type="RNAct" id="Q6PCN3">
    <property type="molecule type" value="protein"/>
</dbReference>
<dbReference type="Bgee" id="ENSMUSG00000015599">
    <property type="expression patterns" value="Expressed in superior frontal gyrus and 113 other cell types or tissues"/>
</dbReference>
<dbReference type="ExpressionAtlas" id="Q6PCN3">
    <property type="expression patterns" value="baseline and differential"/>
</dbReference>
<dbReference type="GO" id="GO:0005829">
    <property type="term" value="C:cytosol"/>
    <property type="evidence" value="ECO:0007669"/>
    <property type="project" value="Ensembl"/>
</dbReference>
<dbReference type="GO" id="GO:0005875">
    <property type="term" value="C:microtubule associated complex"/>
    <property type="evidence" value="ECO:0000305"/>
    <property type="project" value="ARUK-UCL"/>
</dbReference>
<dbReference type="GO" id="GO:0043025">
    <property type="term" value="C:neuronal cell body"/>
    <property type="evidence" value="ECO:0000314"/>
    <property type="project" value="ARUK-UCL"/>
</dbReference>
<dbReference type="GO" id="GO:0005654">
    <property type="term" value="C:nucleoplasm"/>
    <property type="evidence" value="ECO:0007669"/>
    <property type="project" value="Ensembl"/>
</dbReference>
<dbReference type="GO" id="GO:0048471">
    <property type="term" value="C:perinuclear region of cytoplasm"/>
    <property type="evidence" value="ECO:0000314"/>
    <property type="project" value="ARUK-UCL"/>
</dbReference>
<dbReference type="GO" id="GO:0005524">
    <property type="term" value="F:ATP binding"/>
    <property type="evidence" value="ECO:0007669"/>
    <property type="project" value="UniProtKB-KW"/>
</dbReference>
<dbReference type="GO" id="GO:0106310">
    <property type="term" value="F:protein serine kinase activity"/>
    <property type="evidence" value="ECO:0007669"/>
    <property type="project" value="Ensembl"/>
</dbReference>
<dbReference type="GO" id="GO:0004674">
    <property type="term" value="F:protein serine/threonine kinase activity"/>
    <property type="evidence" value="ECO:0007669"/>
    <property type="project" value="UniProtKB-KW"/>
</dbReference>
<dbReference type="GO" id="GO:0004713">
    <property type="term" value="F:protein tyrosine kinase activity"/>
    <property type="evidence" value="ECO:0007669"/>
    <property type="project" value="Ensembl"/>
</dbReference>
<dbReference type="GO" id="GO:0048156">
    <property type="term" value="F:tau protein binding"/>
    <property type="evidence" value="ECO:0007669"/>
    <property type="project" value="Ensembl"/>
</dbReference>
<dbReference type="GO" id="GO:0007611">
    <property type="term" value="P:learning or memory"/>
    <property type="evidence" value="ECO:0007669"/>
    <property type="project" value="Ensembl"/>
</dbReference>
<dbReference type="GO" id="GO:0010629">
    <property type="term" value="P:negative regulation of gene expression"/>
    <property type="evidence" value="ECO:0007669"/>
    <property type="project" value="Ensembl"/>
</dbReference>
<dbReference type="GO" id="GO:0018105">
    <property type="term" value="P:peptidyl-serine phosphorylation"/>
    <property type="evidence" value="ECO:0000250"/>
    <property type="project" value="ARUK-UCL"/>
</dbReference>
<dbReference type="GO" id="GO:0018107">
    <property type="term" value="P:peptidyl-threonine phosphorylation"/>
    <property type="evidence" value="ECO:0000250"/>
    <property type="project" value="ARUK-UCL"/>
</dbReference>
<dbReference type="GO" id="GO:0018108">
    <property type="term" value="P:peptidyl-tyrosine phosphorylation"/>
    <property type="evidence" value="ECO:0000250"/>
    <property type="project" value="ARUK-UCL"/>
</dbReference>
<dbReference type="GO" id="GO:0010628">
    <property type="term" value="P:positive regulation of gene expression"/>
    <property type="evidence" value="ECO:0007669"/>
    <property type="project" value="Ensembl"/>
</dbReference>
<dbReference type="GO" id="GO:1903980">
    <property type="term" value="P:positive regulation of microglial cell activation"/>
    <property type="evidence" value="ECO:0007669"/>
    <property type="project" value="Ensembl"/>
</dbReference>
<dbReference type="GO" id="GO:0032273">
    <property type="term" value="P:positive regulation of protein polymerization"/>
    <property type="evidence" value="ECO:0000250"/>
    <property type="project" value="ARUK-UCL"/>
</dbReference>
<dbReference type="CDD" id="cd14130">
    <property type="entry name" value="STKc_TTBK1"/>
    <property type="match status" value="1"/>
</dbReference>
<dbReference type="FunFam" id="1.10.510.10:FF:000167">
    <property type="entry name" value="Tau tubulin kinase 1"/>
    <property type="match status" value="1"/>
</dbReference>
<dbReference type="FunFam" id="3.30.200.20:FF:000358">
    <property type="entry name" value="Tau tubulin kinase 2b"/>
    <property type="match status" value="1"/>
</dbReference>
<dbReference type="Gene3D" id="1.10.510.10">
    <property type="entry name" value="Transferase(Phosphotransferase) domain 1"/>
    <property type="match status" value="1"/>
</dbReference>
<dbReference type="InterPro" id="IPR050235">
    <property type="entry name" value="CK1_Ser-Thr_kinase"/>
</dbReference>
<dbReference type="InterPro" id="IPR011009">
    <property type="entry name" value="Kinase-like_dom_sf"/>
</dbReference>
<dbReference type="InterPro" id="IPR000719">
    <property type="entry name" value="Prot_kinase_dom"/>
</dbReference>
<dbReference type="InterPro" id="IPR017441">
    <property type="entry name" value="Protein_kinase_ATP_BS"/>
</dbReference>
<dbReference type="InterPro" id="IPR042714">
    <property type="entry name" value="TTBK1_STKc"/>
</dbReference>
<dbReference type="PANTHER" id="PTHR11909">
    <property type="entry name" value="CASEIN KINASE-RELATED"/>
    <property type="match status" value="1"/>
</dbReference>
<dbReference type="Pfam" id="PF00069">
    <property type="entry name" value="Pkinase"/>
    <property type="match status" value="1"/>
</dbReference>
<dbReference type="SMART" id="SM00220">
    <property type="entry name" value="S_TKc"/>
    <property type="match status" value="1"/>
</dbReference>
<dbReference type="SUPFAM" id="SSF56112">
    <property type="entry name" value="Protein kinase-like (PK-like)"/>
    <property type="match status" value="1"/>
</dbReference>
<dbReference type="PROSITE" id="PS00107">
    <property type="entry name" value="PROTEIN_KINASE_ATP"/>
    <property type="match status" value="1"/>
</dbReference>
<dbReference type="PROSITE" id="PS50011">
    <property type="entry name" value="PROTEIN_KINASE_DOM"/>
    <property type="match status" value="1"/>
</dbReference>